<organism>
    <name type="scientific">Synechococcus sp. (strain PCC 6716)</name>
    <dbReference type="NCBI Taxonomy" id="32048"/>
    <lineage>
        <taxon>Bacteria</taxon>
        <taxon>Bacillati</taxon>
        <taxon>Cyanobacteriota</taxon>
        <taxon>Cyanophyceae</taxon>
        <taxon>Synechococcales</taxon>
        <taxon>Synechococcaceae</taxon>
        <taxon>Synechococcus</taxon>
    </lineage>
</organism>
<sequence>MDAVILMATEEVGHFGLNTNLLETNVINLAIIIGVLVYFGRGLLGKTLGDRQQQIATAIAEAEERQRTAAARLAQEQQKLAQAKEEAARIREAALVRAKAAKEELIAKAQQEIERLKQTASQDTSAATERAIAEIRERITALALAQAEQQLKERLSHDAELQRTLVDRSIALLGGK</sequence>
<reference key="1">
    <citation type="journal article" date="1993" name="Biochem. J.">
        <title>Organization and sequences of genes for the subunits of ATP synthase in the thermophilic cyanobacterium Synechococcus 6716.</title>
        <authorList>
            <person name="van Walraven H.S."/>
            <person name="Lutter R."/>
            <person name="Walker J.E."/>
        </authorList>
    </citation>
    <scope>NUCLEOTIDE SEQUENCE [GENOMIC DNA]</scope>
</reference>
<protein>
    <recommendedName>
        <fullName evidence="1">ATP synthase subunit b</fullName>
    </recommendedName>
    <alternativeName>
        <fullName evidence="1">ATP synthase F(0) sector subunit b</fullName>
    </alternativeName>
    <alternativeName>
        <fullName evidence="1">ATPase subunit I</fullName>
    </alternativeName>
    <alternativeName>
        <fullName evidence="1">F-type ATPase subunit b</fullName>
        <shortName evidence="1">F-ATPase subunit b</shortName>
    </alternativeName>
</protein>
<feature type="chain" id="PRO_0000082391" description="ATP synthase subunit b">
    <location>
        <begin position="1"/>
        <end position="176"/>
    </location>
</feature>
<feature type="transmembrane region" description="Helical" evidence="1">
    <location>
        <begin position="26"/>
        <end position="45"/>
    </location>
</feature>
<name>ATPF_SYNP1</name>
<comment type="function">
    <text evidence="1">F(1)F(0) ATP synthase produces ATP from ADP in the presence of a proton or sodium gradient. F-type ATPases consist of two structural domains, F(1) containing the extramembraneous catalytic core and F(0) containing the membrane proton channel, linked together by a central stalk and a peripheral stalk. During catalysis, ATP synthesis in the catalytic domain of F(1) is coupled via a rotary mechanism of the central stalk subunits to proton translocation.</text>
</comment>
<comment type="function">
    <text evidence="1">Component of the F(0) channel, it forms part of the peripheral stalk, linking F(1) to F(0).</text>
</comment>
<comment type="subunit">
    <text evidence="1">F-type ATPases have 2 components, F(1) - the catalytic core - and F(0) - the membrane proton channel. F(1) has five subunits: alpha(3), beta(3), gamma(1), delta(1), epsilon(1). F(0) has four main subunits: a(1), b(1), b'(1) and c(10-14). The alpha and beta chains form an alternating ring which encloses part of the gamma chain. F(1) is attached to F(0) by a central stalk formed by the gamma and epsilon chains, while a peripheral stalk is formed by the delta, b and b' chains.</text>
</comment>
<comment type="subcellular location">
    <subcellularLocation>
        <location evidence="1">Cellular thylakoid membrane</location>
        <topology evidence="1">Single-pass membrane protein</topology>
    </subcellularLocation>
</comment>
<comment type="similarity">
    <text evidence="1">Belongs to the ATPase B chain family.</text>
</comment>
<dbReference type="EMBL" id="X70431">
    <property type="protein sequence ID" value="CAA49873.1"/>
    <property type="molecule type" value="Genomic_DNA"/>
</dbReference>
<dbReference type="SMR" id="Q05365"/>
<dbReference type="GO" id="GO:0031676">
    <property type="term" value="C:plasma membrane-derived thylakoid membrane"/>
    <property type="evidence" value="ECO:0007669"/>
    <property type="project" value="UniProtKB-SubCell"/>
</dbReference>
<dbReference type="GO" id="GO:0045259">
    <property type="term" value="C:proton-transporting ATP synthase complex"/>
    <property type="evidence" value="ECO:0007669"/>
    <property type="project" value="UniProtKB-KW"/>
</dbReference>
<dbReference type="GO" id="GO:0046933">
    <property type="term" value="F:proton-transporting ATP synthase activity, rotational mechanism"/>
    <property type="evidence" value="ECO:0007669"/>
    <property type="project" value="UniProtKB-UniRule"/>
</dbReference>
<dbReference type="CDD" id="cd06503">
    <property type="entry name" value="ATP-synt_Fo_b"/>
    <property type="match status" value="1"/>
</dbReference>
<dbReference type="HAMAP" id="MF_01398">
    <property type="entry name" value="ATP_synth_b_bprime"/>
    <property type="match status" value="1"/>
</dbReference>
<dbReference type="InterPro" id="IPR002146">
    <property type="entry name" value="ATP_synth_b/b'su_bac/chlpt"/>
</dbReference>
<dbReference type="NCBIfam" id="NF005606">
    <property type="entry name" value="PRK07352.1"/>
    <property type="match status" value="1"/>
</dbReference>
<dbReference type="PANTHER" id="PTHR34264">
    <property type="entry name" value="ATP SYNTHASE SUBUNIT B, CHLOROPLASTIC"/>
    <property type="match status" value="1"/>
</dbReference>
<dbReference type="PANTHER" id="PTHR34264:SF3">
    <property type="entry name" value="ATP SYNTHASE SUBUNIT B, CHLOROPLASTIC"/>
    <property type="match status" value="1"/>
</dbReference>
<dbReference type="Pfam" id="PF00430">
    <property type="entry name" value="ATP-synt_B"/>
    <property type="match status" value="1"/>
</dbReference>
<accession>Q05365</accession>
<keyword id="KW-0066">ATP synthesis</keyword>
<keyword id="KW-0138">CF(0)</keyword>
<keyword id="KW-0375">Hydrogen ion transport</keyword>
<keyword id="KW-0406">Ion transport</keyword>
<keyword id="KW-0472">Membrane</keyword>
<keyword id="KW-0793">Thylakoid</keyword>
<keyword id="KW-0812">Transmembrane</keyword>
<keyword id="KW-1133">Transmembrane helix</keyword>
<keyword id="KW-0813">Transport</keyword>
<evidence type="ECO:0000255" key="1">
    <source>
        <dbReference type="HAMAP-Rule" id="MF_01398"/>
    </source>
</evidence>
<proteinExistence type="inferred from homology"/>
<gene>
    <name evidence="1" type="primary">atpF</name>
</gene>